<name>RL3_FLAJ1</name>
<proteinExistence type="inferred from homology"/>
<evidence type="ECO:0000255" key="1">
    <source>
        <dbReference type="HAMAP-Rule" id="MF_01325"/>
    </source>
</evidence>
<evidence type="ECO:0000305" key="2"/>
<sequence>MSGLIGKKIGMTSIFDENGKNIPCTVIEAGPCVVTQVRTNEVDGYEALQLGFDDKNEKHSTKAALGHFKKAGTVAKKKVVEFQDFATEQKLGDLIDVSIFEEGEFVDVQGVSKGKGFQGVVKRHGFGGVGQATHGQHNRLRAPGSVGASSYPSRVFKGMRMAGRMGGDNVKVQNLRVLKVVAEKNLLVVKGCIPGHKNSYVIIQK</sequence>
<comment type="function">
    <text evidence="1">One of the primary rRNA binding proteins, it binds directly near the 3'-end of the 23S rRNA, where it nucleates assembly of the 50S subunit.</text>
</comment>
<comment type="subunit">
    <text evidence="1">Part of the 50S ribosomal subunit. Forms a cluster with proteins L14 and L19.</text>
</comment>
<comment type="similarity">
    <text evidence="1">Belongs to the universal ribosomal protein uL3 family.</text>
</comment>
<organism>
    <name type="scientific">Flavobacterium johnsoniae (strain ATCC 17061 / DSM 2064 / JCM 8514 / BCRC 14874 / CCUG 350202 / NBRC 14942 / NCIMB 11054 / UW101)</name>
    <name type="common">Cytophaga johnsonae</name>
    <dbReference type="NCBI Taxonomy" id="376686"/>
    <lineage>
        <taxon>Bacteria</taxon>
        <taxon>Pseudomonadati</taxon>
        <taxon>Bacteroidota</taxon>
        <taxon>Flavobacteriia</taxon>
        <taxon>Flavobacteriales</taxon>
        <taxon>Flavobacteriaceae</taxon>
        <taxon>Flavobacterium</taxon>
    </lineage>
</organism>
<dbReference type="EMBL" id="CP000685">
    <property type="protein sequence ID" value="ABQ03433.1"/>
    <property type="molecule type" value="Genomic_DNA"/>
</dbReference>
<dbReference type="RefSeq" id="WP_012022491.1">
    <property type="nucleotide sequence ID" value="NZ_MUGZ01000005.1"/>
</dbReference>
<dbReference type="SMR" id="A5FMY1"/>
<dbReference type="STRING" id="376686.Fjoh_0397"/>
<dbReference type="KEGG" id="fjo:Fjoh_0397"/>
<dbReference type="eggNOG" id="COG0087">
    <property type="taxonomic scope" value="Bacteria"/>
</dbReference>
<dbReference type="HOGENOM" id="CLU_044142_4_1_10"/>
<dbReference type="OrthoDB" id="9806135at2"/>
<dbReference type="Proteomes" id="UP000006694">
    <property type="component" value="Chromosome"/>
</dbReference>
<dbReference type="GO" id="GO:1990904">
    <property type="term" value="C:ribonucleoprotein complex"/>
    <property type="evidence" value="ECO:0007669"/>
    <property type="project" value="UniProtKB-KW"/>
</dbReference>
<dbReference type="GO" id="GO:0005840">
    <property type="term" value="C:ribosome"/>
    <property type="evidence" value="ECO:0007669"/>
    <property type="project" value="UniProtKB-KW"/>
</dbReference>
<dbReference type="GO" id="GO:0019843">
    <property type="term" value="F:rRNA binding"/>
    <property type="evidence" value="ECO:0007669"/>
    <property type="project" value="UniProtKB-UniRule"/>
</dbReference>
<dbReference type="GO" id="GO:0003735">
    <property type="term" value="F:structural constituent of ribosome"/>
    <property type="evidence" value="ECO:0007669"/>
    <property type="project" value="InterPro"/>
</dbReference>
<dbReference type="GO" id="GO:0006412">
    <property type="term" value="P:translation"/>
    <property type="evidence" value="ECO:0007669"/>
    <property type="project" value="UniProtKB-UniRule"/>
</dbReference>
<dbReference type="FunFam" id="2.40.30.10:FF:000047">
    <property type="entry name" value="50S ribosomal protein L3"/>
    <property type="match status" value="1"/>
</dbReference>
<dbReference type="FunFam" id="3.30.160.810:FF:000001">
    <property type="entry name" value="50S ribosomal protein L3"/>
    <property type="match status" value="1"/>
</dbReference>
<dbReference type="Gene3D" id="3.30.160.810">
    <property type="match status" value="1"/>
</dbReference>
<dbReference type="Gene3D" id="2.40.30.10">
    <property type="entry name" value="Translation factors"/>
    <property type="match status" value="1"/>
</dbReference>
<dbReference type="HAMAP" id="MF_01325_B">
    <property type="entry name" value="Ribosomal_uL3_B"/>
    <property type="match status" value="1"/>
</dbReference>
<dbReference type="InterPro" id="IPR000597">
    <property type="entry name" value="Ribosomal_uL3"/>
</dbReference>
<dbReference type="InterPro" id="IPR019927">
    <property type="entry name" value="Ribosomal_uL3_bac/org-type"/>
</dbReference>
<dbReference type="InterPro" id="IPR019926">
    <property type="entry name" value="Ribosomal_uL3_CS"/>
</dbReference>
<dbReference type="InterPro" id="IPR009000">
    <property type="entry name" value="Transl_B-barrel_sf"/>
</dbReference>
<dbReference type="NCBIfam" id="TIGR03625">
    <property type="entry name" value="L3_bact"/>
    <property type="match status" value="1"/>
</dbReference>
<dbReference type="PANTHER" id="PTHR11229">
    <property type="entry name" value="50S RIBOSOMAL PROTEIN L3"/>
    <property type="match status" value="1"/>
</dbReference>
<dbReference type="PANTHER" id="PTHR11229:SF16">
    <property type="entry name" value="LARGE RIBOSOMAL SUBUNIT PROTEIN UL3C"/>
    <property type="match status" value="1"/>
</dbReference>
<dbReference type="Pfam" id="PF00297">
    <property type="entry name" value="Ribosomal_L3"/>
    <property type="match status" value="1"/>
</dbReference>
<dbReference type="SUPFAM" id="SSF50447">
    <property type="entry name" value="Translation proteins"/>
    <property type="match status" value="1"/>
</dbReference>
<dbReference type="PROSITE" id="PS00474">
    <property type="entry name" value="RIBOSOMAL_L3"/>
    <property type="match status" value="1"/>
</dbReference>
<accession>A5FMY1</accession>
<protein>
    <recommendedName>
        <fullName evidence="1">Large ribosomal subunit protein uL3</fullName>
    </recommendedName>
    <alternativeName>
        <fullName evidence="2">50S ribosomal protein L3</fullName>
    </alternativeName>
</protein>
<reference key="1">
    <citation type="journal article" date="2009" name="Appl. Environ. Microbiol.">
        <title>Novel features of the polysaccharide-digesting gliding bacterium Flavobacterium johnsoniae as revealed by genome sequence analysis.</title>
        <authorList>
            <person name="McBride M.J."/>
            <person name="Xie G."/>
            <person name="Martens E.C."/>
            <person name="Lapidus A."/>
            <person name="Henrissat B."/>
            <person name="Rhodes R.G."/>
            <person name="Goltsman E."/>
            <person name="Wang W."/>
            <person name="Xu J."/>
            <person name="Hunnicutt D.W."/>
            <person name="Staroscik A.M."/>
            <person name="Hoover T.R."/>
            <person name="Cheng Y.Q."/>
            <person name="Stein J.L."/>
        </authorList>
    </citation>
    <scope>NUCLEOTIDE SEQUENCE [LARGE SCALE GENOMIC DNA]</scope>
    <source>
        <strain>ATCC 17061 / DSM 2064 / JCM 8514 / BCRC 14874 / CCUG 350202 / NBRC 14942 / NCIMB 11054 / UW101</strain>
    </source>
</reference>
<gene>
    <name evidence="1" type="primary">rplC</name>
    <name type="ordered locus">Fjoh_0397</name>
</gene>
<keyword id="KW-0687">Ribonucleoprotein</keyword>
<keyword id="KW-0689">Ribosomal protein</keyword>
<keyword id="KW-0694">RNA-binding</keyword>
<keyword id="KW-0699">rRNA-binding</keyword>
<feature type="chain" id="PRO_1000086440" description="Large ribosomal subunit protein uL3">
    <location>
        <begin position="1"/>
        <end position="205"/>
    </location>
</feature>